<gene>
    <name evidence="1" type="primary">rplC</name>
    <name type="ordered locus">Mmwyl1_4276</name>
</gene>
<feature type="chain" id="PRO_1000086446" description="Large ribosomal subunit protein uL3">
    <location>
        <begin position="1"/>
        <end position="212"/>
    </location>
</feature>
<feature type="modified residue" description="N5-methylglutamine" evidence="1">
    <location>
        <position position="152"/>
    </location>
</feature>
<proteinExistence type="inferred from homology"/>
<sequence length="212" mass="22638">MAIQLVGRKAGMTRIFTEDGVSVPVTVIEVEPNRVTQVKTAETDGYQAVQVTVGSRRSSRVNKAAAGHYAKANVEAGRGLWEFRLAGDEKEINVGDELTVADFESIQMVDVTGQSKGKGFQGAIKRHNFSMQDATHGNSLSHRAPGSIGQCQTPGRVWKGKKMAGHMGAAQVTTQSLEVVRVDTERNLILVKGAVPGAVNGDVILQSAVKAR</sequence>
<reference key="1">
    <citation type="submission" date="2007-06" db="EMBL/GenBank/DDBJ databases">
        <title>Complete sequence of Marinomonas sp. MWYL1.</title>
        <authorList>
            <consortium name="US DOE Joint Genome Institute"/>
            <person name="Copeland A."/>
            <person name="Lucas S."/>
            <person name="Lapidus A."/>
            <person name="Barry K."/>
            <person name="Glavina del Rio T."/>
            <person name="Dalin E."/>
            <person name="Tice H."/>
            <person name="Pitluck S."/>
            <person name="Kiss H."/>
            <person name="Brettin T."/>
            <person name="Bruce D."/>
            <person name="Detter J.C."/>
            <person name="Han C."/>
            <person name="Schmutz J."/>
            <person name="Larimer F."/>
            <person name="Land M."/>
            <person name="Hauser L."/>
            <person name="Kyrpides N."/>
            <person name="Kim E."/>
            <person name="Johnston A.W.B."/>
            <person name="Todd J.D."/>
            <person name="Rogers R."/>
            <person name="Wexler M."/>
            <person name="Bond P.L."/>
            <person name="Li Y."/>
            <person name="Richardson P."/>
        </authorList>
    </citation>
    <scope>NUCLEOTIDE SEQUENCE [LARGE SCALE GENOMIC DNA]</scope>
    <source>
        <strain>MWYL1</strain>
    </source>
</reference>
<dbReference type="EMBL" id="CP000749">
    <property type="protein sequence ID" value="ABR73171.1"/>
    <property type="molecule type" value="Genomic_DNA"/>
</dbReference>
<dbReference type="SMR" id="A6W392"/>
<dbReference type="STRING" id="400668.Mmwyl1_4276"/>
<dbReference type="KEGG" id="mmw:Mmwyl1_4276"/>
<dbReference type="eggNOG" id="COG0087">
    <property type="taxonomic scope" value="Bacteria"/>
</dbReference>
<dbReference type="HOGENOM" id="CLU_044142_4_1_6"/>
<dbReference type="OrthoDB" id="9806135at2"/>
<dbReference type="GO" id="GO:0022625">
    <property type="term" value="C:cytosolic large ribosomal subunit"/>
    <property type="evidence" value="ECO:0007669"/>
    <property type="project" value="TreeGrafter"/>
</dbReference>
<dbReference type="GO" id="GO:0019843">
    <property type="term" value="F:rRNA binding"/>
    <property type="evidence" value="ECO:0007669"/>
    <property type="project" value="UniProtKB-UniRule"/>
</dbReference>
<dbReference type="GO" id="GO:0003735">
    <property type="term" value="F:structural constituent of ribosome"/>
    <property type="evidence" value="ECO:0007669"/>
    <property type="project" value="InterPro"/>
</dbReference>
<dbReference type="GO" id="GO:0006412">
    <property type="term" value="P:translation"/>
    <property type="evidence" value="ECO:0007669"/>
    <property type="project" value="UniProtKB-UniRule"/>
</dbReference>
<dbReference type="FunFam" id="2.40.30.10:FF:000004">
    <property type="entry name" value="50S ribosomal protein L3"/>
    <property type="match status" value="1"/>
</dbReference>
<dbReference type="FunFam" id="3.30.160.810:FF:000001">
    <property type="entry name" value="50S ribosomal protein L3"/>
    <property type="match status" value="1"/>
</dbReference>
<dbReference type="Gene3D" id="3.30.160.810">
    <property type="match status" value="1"/>
</dbReference>
<dbReference type="Gene3D" id="2.40.30.10">
    <property type="entry name" value="Translation factors"/>
    <property type="match status" value="1"/>
</dbReference>
<dbReference type="HAMAP" id="MF_01325_B">
    <property type="entry name" value="Ribosomal_uL3_B"/>
    <property type="match status" value="1"/>
</dbReference>
<dbReference type="InterPro" id="IPR000597">
    <property type="entry name" value="Ribosomal_uL3"/>
</dbReference>
<dbReference type="InterPro" id="IPR019927">
    <property type="entry name" value="Ribosomal_uL3_bac/org-type"/>
</dbReference>
<dbReference type="InterPro" id="IPR019926">
    <property type="entry name" value="Ribosomal_uL3_CS"/>
</dbReference>
<dbReference type="InterPro" id="IPR009000">
    <property type="entry name" value="Transl_B-barrel_sf"/>
</dbReference>
<dbReference type="NCBIfam" id="TIGR03625">
    <property type="entry name" value="L3_bact"/>
    <property type="match status" value="1"/>
</dbReference>
<dbReference type="PANTHER" id="PTHR11229">
    <property type="entry name" value="50S RIBOSOMAL PROTEIN L3"/>
    <property type="match status" value="1"/>
</dbReference>
<dbReference type="PANTHER" id="PTHR11229:SF16">
    <property type="entry name" value="LARGE RIBOSOMAL SUBUNIT PROTEIN UL3C"/>
    <property type="match status" value="1"/>
</dbReference>
<dbReference type="Pfam" id="PF00297">
    <property type="entry name" value="Ribosomal_L3"/>
    <property type="match status" value="1"/>
</dbReference>
<dbReference type="SUPFAM" id="SSF50447">
    <property type="entry name" value="Translation proteins"/>
    <property type="match status" value="1"/>
</dbReference>
<dbReference type="PROSITE" id="PS00474">
    <property type="entry name" value="RIBOSOMAL_L3"/>
    <property type="match status" value="1"/>
</dbReference>
<organism>
    <name type="scientific">Marinomonas sp. (strain MWYL1)</name>
    <dbReference type="NCBI Taxonomy" id="400668"/>
    <lineage>
        <taxon>Bacteria</taxon>
        <taxon>Pseudomonadati</taxon>
        <taxon>Pseudomonadota</taxon>
        <taxon>Gammaproteobacteria</taxon>
        <taxon>Oceanospirillales</taxon>
        <taxon>Oceanospirillaceae</taxon>
        <taxon>Marinomonas</taxon>
    </lineage>
</organism>
<keyword id="KW-0488">Methylation</keyword>
<keyword id="KW-0687">Ribonucleoprotein</keyword>
<keyword id="KW-0689">Ribosomal protein</keyword>
<keyword id="KW-0694">RNA-binding</keyword>
<keyword id="KW-0699">rRNA-binding</keyword>
<name>RL3_MARMS</name>
<protein>
    <recommendedName>
        <fullName evidence="1">Large ribosomal subunit protein uL3</fullName>
    </recommendedName>
    <alternativeName>
        <fullName evidence="2">50S ribosomal protein L3</fullName>
    </alternativeName>
</protein>
<comment type="function">
    <text evidence="1">One of the primary rRNA binding proteins, it binds directly near the 3'-end of the 23S rRNA, where it nucleates assembly of the 50S subunit.</text>
</comment>
<comment type="subunit">
    <text evidence="1">Part of the 50S ribosomal subunit. Forms a cluster with proteins L14 and L19.</text>
</comment>
<comment type="PTM">
    <text evidence="1">Methylated by PrmB.</text>
</comment>
<comment type="similarity">
    <text evidence="1">Belongs to the universal ribosomal protein uL3 family.</text>
</comment>
<evidence type="ECO:0000255" key="1">
    <source>
        <dbReference type="HAMAP-Rule" id="MF_01325"/>
    </source>
</evidence>
<evidence type="ECO:0000305" key="2"/>
<accession>A6W392</accession>